<keyword id="KW-1185">Reference proteome</keyword>
<keyword id="KW-0687">Ribonucleoprotein</keyword>
<keyword id="KW-0689">Ribosomal protein</keyword>
<keyword id="KW-0694">RNA-binding</keyword>
<keyword id="KW-0699">rRNA-binding</keyword>
<reference key="1">
    <citation type="journal article" date="2001" name="DNA Res.">
        <title>Complete genomic sequence of the filamentous nitrogen-fixing cyanobacterium Anabaena sp. strain PCC 7120.</title>
        <authorList>
            <person name="Kaneko T."/>
            <person name="Nakamura Y."/>
            <person name="Wolk C.P."/>
            <person name="Kuritz T."/>
            <person name="Sasamoto S."/>
            <person name="Watanabe A."/>
            <person name="Iriguchi M."/>
            <person name="Ishikawa A."/>
            <person name="Kawashima K."/>
            <person name="Kimura T."/>
            <person name="Kishida Y."/>
            <person name="Kohara M."/>
            <person name="Matsumoto M."/>
            <person name="Matsuno A."/>
            <person name="Muraki A."/>
            <person name="Nakazaki N."/>
            <person name="Shimpo S."/>
            <person name="Sugimoto M."/>
            <person name="Takazawa M."/>
            <person name="Yamada M."/>
            <person name="Yasuda M."/>
            <person name="Tabata S."/>
        </authorList>
    </citation>
    <scope>NUCLEOTIDE SEQUENCE [LARGE SCALE GENOMIC DNA]</scope>
    <source>
        <strain>PCC 7120 / SAG 25.82 / UTEX 2576</strain>
    </source>
</reference>
<name>RS4_NOSS1</name>
<proteinExistence type="inferred from homology"/>
<comment type="function">
    <text evidence="1">One of the primary rRNA binding proteins, it binds directly to 16S rRNA where it nucleates assembly of the body of the 30S subunit.</text>
</comment>
<comment type="function">
    <text evidence="1">With S5 and S12 plays an important role in translational accuracy.</text>
</comment>
<comment type="subunit">
    <text evidence="1">Part of the 30S ribosomal subunit. Contacts protein S5. The interaction surface between S4 and S5 is involved in control of translational fidelity.</text>
</comment>
<comment type="similarity">
    <text evidence="1">Belongs to the universal ribosomal protein uS4 family.</text>
</comment>
<feature type="chain" id="PRO_0000132328" description="Small ribosomal subunit protein uS4">
    <location>
        <begin position="1"/>
        <end position="202"/>
    </location>
</feature>
<feature type="domain" description="S4 RNA-binding" evidence="1">
    <location>
        <begin position="90"/>
        <end position="152"/>
    </location>
</feature>
<feature type="region of interest" description="Disordered" evidence="2">
    <location>
        <begin position="22"/>
        <end position="43"/>
    </location>
</feature>
<sequence length="202" mass="23247">MSRYRGPRLRIVRRLGDLPGLTRKSARRAYPPGQHGQNRKKRSEYAIRLEEKQKLRLNYGLTEKQLLRYVRRARRVTGSTGQVLLQLLEMRLDNTVFRLGMAPTIPAARQLVNHGHVTVNGRVVNIASYQCRPGEEIAVRDKAPSRKLVENNLQYPGLANLPSHLEFDKNKLVGKVNSVIEREWVALQVNELLVVEYYSRQA</sequence>
<dbReference type="EMBL" id="BA000019">
    <property type="protein sequence ID" value="BAB74436.1"/>
    <property type="molecule type" value="Genomic_DNA"/>
</dbReference>
<dbReference type="PIR" id="AB2148">
    <property type="entry name" value="AB2148"/>
</dbReference>
<dbReference type="RefSeq" id="WP_010996890.1">
    <property type="nucleotide sequence ID" value="NZ_RSCN01000030.1"/>
</dbReference>
<dbReference type="SMR" id="Q8YTI0"/>
<dbReference type="STRING" id="103690.gene:10494770"/>
<dbReference type="KEGG" id="ana:alr2737"/>
<dbReference type="eggNOG" id="COG0522">
    <property type="taxonomic scope" value="Bacteria"/>
</dbReference>
<dbReference type="OrthoDB" id="9803672at2"/>
<dbReference type="Proteomes" id="UP000002483">
    <property type="component" value="Chromosome"/>
</dbReference>
<dbReference type="GO" id="GO:0015935">
    <property type="term" value="C:small ribosomal subunit"/>
    <property type="evidence" value="ECO:0007669"/>
    <property type="project" value="InterPro"/>
</dbReference>
<dbReference type="GO" id="GO:0019843">
    <property type="term" value="F:rRNA binding"/>
    <property type="evidence" value="ECO:0007669"/>
    <property type="project" value="UniProtKB-UniRule"/>
</dbReference>
<dbReference type="GO" id="GO:0003735">
    <property type="term" value="F:structural constituent of ribosome"/>
    <property type="evidence" value="ECO:0007669"/>
    <property type="project" value="InterPro"/>
</dbReference>
<dbReference type="GO" id="GO:0042274">
    <property type="term" value="P:ribosomal small subunit biogenesis"/>
    <property type="evidence" value="ECO:0007669"/>
    <property type="project" value="TreeGrafter"/>
</dbReference>
<dbReference type="GO" id="GO:0006412">
    <property type="term" value="P:translation"/>
    <property type="evidence" value="ECO:0007669"/>
    <property type="project" value="UniProtKB-UniRule"/>
</dbReference>
<dbReference type="CDD" id="cd00165">
    <property type="entry name" value="S4"/>
    <property type="match status" value="1"/>
</dbReference>
<dbReference type="FunFam" id="3.10.290.10:FF:000001">
    <property type="entry name" value="30S ribosomal protein S4"/>
    <property type="match status" value="1"/>
</dbReference>
<dbReference type="FunFam" id="1.10.1050.10:FF:000002">
    <property type="entry name" value="30S ribosomal protein S4, chloroplastic"/>
    <property type="match status" value="1"/>
</dbReference>
<dbReference type="Gene3D" id="1.10.1050.10">
    <property type="entry name" value="Ribosomal Protein S4 Delta 41, Chain A, domain 1"/>
    <property type="match status" value="1"/>
</dbReference>
<dbReference type="Gene3D" id="3.10.290.10">
    <property type="entry name" value="RNA-binding S4 domain"/>
    <property type="match status" value="1"/>
</dbReference>
<dbReference type="HAMAP" id="MF_01306_B">
    <property type="entry name" value="Ribosomal_uS4_B"/>
    <property type="match status" value="1"/>
</dbReference>
<dbReference type="InterPro" id="IPR022801">
    <property type="entry name" value="Ribosomal_uS4"/>
</dbReference>
<dbReference type="InterPro" id="IPR005709">
    <property type="entry name" value="Ribosomal_uS4_bac-type"/>
</dbReference>
<dbReference type="InterPro" id="IPR018079">
    <property type="entry name" value="Ribosomal_uS4_CS"/>
</dbReference>
<dbReference type="InterPro" id="IPR001912">
    <property type="entry name" value="Ribosomal_uS4_N"/>
</dbReference>
<dbReference type="InterPro" id="IPR002942">
    <property type="entry name" value="S4_RNA-bd"/>
</dbReference>
<dbReference type="InterPro" id="IPR036986">
    <property type="entry name" value="S4_RNA-bd_sf"/>
</dbReference>
<dbReference type="NCBIfam" id="NF003717">
    <property type="entry name" value="PRK05327.1"/>
    <property type="match status" value="1"/>
</dbReference>
<dbReference type="NCBIfam" id="TIGR01017">
    <property type="entry name" value="rpsD_bact"/>
    <property type="match status" value="1"/>
</dbReference>
<dbReference type="PANTHER" id="PTHR11831">
    <property type="entry name" value="30S 40S RIBOSOMAL PROTEIN"/>
    <property type="match status" value="1"/>
</dbReference>
<dbReference type="PANTHER" id="PTHR11831:SF4">
    <property type="entry name" value="SMALL RIBOSOMAL SUBUNIT PROTEIN US4M"/>
    <property type="match status" value="1"/>
</dbReference>
<dbReference type="Pfam" id="PF00163">
    <property type="entry name" value="Ribosomal_S4"/>
    <property type="match status" value="1"/>
</dbReference>
<dbReference type="Pfam" id="PF01479">
    <property type="entry name" value="S4"/>
    <property type="match status" value="1"/>
</dbReference>
<dbReference type="SMART" id="SM01390">
    <property type="entry name" value="Ribosomal_S4"/>
    <property type="match status" value="1"/>
</dbReference>
<dbReference type="SMART" id="SM00363">
    <property type="entry name" value="S4"/>
    <property type="match status" value="1"/>
</dbReference>
<dbReference type="SUPFAM" id="SSF55174">
    <property type="entry name" value="Alpha-L RNA-binding motif"/>
    <property type="match status" value="1"/>
</dbReference>
<dbReference type="PROSITE" id="PS00632">
    <property type="entry name" value="RIBOSOMAL_S4"/>
    <property type="match status" value="1"/>
</dbReference>
<dbReference type="PROSITE" id="PS50889">
    <property type="entry name" value="S4"/>
    <property type="match status" value="1"/>
</dbReference>
<organism>
    <name type="scientific">Nostoc sp. (strain PCC 7120 / SAG 25.82 / UTEX 2576)</name>
    <dbReference type="NCBI Taxonomy" id="103690"/>
    <lineage>
        <taxon>Bacteria</taxon>
        <taxon>Bacillati</taxon>
        <taxon>Cyanobacteriota</taxon>
        <taxon>Cyanophyceae</taxon>
        <taxon>Nostocales</taxon>
        <taxon>Nostocaceae</taxon>
        <taxon>Nostoc</taxon>
    </lineage>
</organism>
<evidence type="ECO:0000255" key="1">
    <source>
        <dbReference type="HAMAP-Rule" id="MF_01306"/>
    </source>
</evidence>
<evidence type="ECO:0000256" key="2">
    <source>
        <dbReference type="SAM" id="MobiDB-lite"/>
    </source>
</evidence>
<evidence type="ECO:0000305" key="3"/>
<accession>Q8YTI0</accession>
<gene>
    <name evidence="1" type="primary">rpsD</name>
    <name evidence="1" type="synonym">rps4</name>
    <name type="ordered locus">alr2737</name>
</gene>
<protein>
    <recommendedName>
        <fullName evidence="1">Small ribosomal subunit protein uS4</fullName>
    </recommendedName>
    <alternativeName>
        <fullName evidence="3">30S ribosomal protein S4</fullName>
    </alternativeName>
</protein>